<proteinExistence type="inferred from homology"/>
<sequence>MNLEQLYDVIVVGGGHAGTEAALAAARLGVKTLLLTHNIDLLGQMSCNPAIGGIGKGHLVKEIDALDGAMAKAADQAGIQFRILNASKGPAVRATRAQADRVLYRKAIRTQLQSQANLTIFQQAVDDLKIEGGLVTGVVTQMGLTLKARAVVLTVGTFLGGKIHVGMNQYAGGRAGDPPSIALSKSLRDLDLPVGRLKTGTPPRIDRRTIDFSQMVEQPGDTPVPVFSYLGTASDHPQQVPCHITHTTEATHDIIRNNLDKSPMYAGVIEGVGPRYCPSIEDKIVRFADKTSHQIFVEPEGLTTEEIYPNGISTSLPFEVQVQFVRTIKGFENAHITRPGYAIEYDYFDPRGLTSFLQTKAIPNLFFAGQINGTTGYEEAAAQGIIAGMNAALQIKDQELWCPRRDEAYIGVLIDDLITCGTQEPYRMFTSRAEYRLLLREDNADLRLTEKGRQLGLVGDERWDSFSKKREAIESTQALLHNSWVRVHHNDLFKEALLNPMQHDCRAAEFLKRPEINYQHLLMMDDLNLPELPQEITEQIEIQNKYAGYIDRQQQEIEKLRKHENTMLPETLDYNDVVGLSSEVIQKLNRIKPTSLAQAGRISGVTPAALSLLLVHLKKSRLPV</sequence>
<gene>
    <name evidence="1" type="primary">mnmG</name>
    <name evidence="1" type="synonym">gidA</name>
    <name type="ordered locus">LPC_3175</name>
</gene>
<feature type="chain" id="PRO_1000016618" description="tRNA uridine 5-carboxymethylaminomethyl modification enzyme MnmG">
    <location>
        <begin position="1"/>
        <end position="624"/>
    </location>
</feature>
<feature type="binding site" evidence="1">
    <location>
        <begin position="13"/>
        <end position="18"/>
    </location>
    <ligand>
        <name>FAD</name>
        <dbReference type="ChEBI" id="CHEBI:57692"/>
    </ligand>
</feature>
<feature type="binding site" evidence="1">
    <location>
        <position position="125"/>
    </location>
    <ligand>
        <name>FAD</name>
        <dbReference type="ChEBI" id="CHEBI:57692"/>
    </ligand>
</feature>
<feature type="binding site" evidence="1">
    <location>
        <position position="180"/>
    </location>
    <ligand>
        <name>FAD</name>
        <dbReference type="ChEBI" id="CHEBI:57692"/>
    </ligand>
</feature>
<feature type="binding site" evidence="1">
    <location>
        <begin position="273"/>
        <end position="287"/>
    </location>
    <ligand>
        <name>NAD(+)</name>
        <dbReference type="ChEBI" id="CHEBI:57540"/>
    </ligand>
</feature>
<feature type="binding site" evidence="1">
    <location>
        <position position="370"/>
    </location>
    <ligand>
        <name>FAD</name>
        <dbReference type="ChEBI" id="CHEBI:57692"/>
    </ligand>
</feature>
<keyword id="KW-0963">Cytoplasm</keyword>
<keyword id="KW-0274">FAD</keyword>
<keyword id="KW-0285">Flavoprotein</keyword>
<keyword id="KW-0520">NAD</keyword>
<keyword id="KW-0819">tRNA processing</keyword>
<reference key="1">
    <citation type="submission" date="2006-11" db="EMBL/GenBank/DDBJ databases">
        <title>Identification and characterization of a new conjugation/ type IVA secretion system (trb/tra) of L. pneumophila Corby localized on a mobile genomic island.</title>
        <authorList>
            <person name="Gloeckner G."/>
            <person name="Albert-Weissenberger C."/>
            <person name="Weinmann E."/>
            <person name="Jacobi S."/>
            <person name="Schunder E."/>
            <person name="Steinert M."/>
            <person name="Buchrieser C."/>
            <person name="Hacker J."/>
            <person name="Heuner K."/>
        </authorList>
    </citation>
    <scope>NUCLEOTIDE SEQUENCE [LARGE SCALE GENOMIC DNA]</scope>
    <source>
        <strain>Corby</strain>
    </source>
</reference>
<dbReference type="EMBL" id="CP000675">
    <property type="protein sequence ID" value="ABQ57062.1"/>
    <property type="molecule type" value="Genomic_DNA"/>
</dbReference>
<dbReference type="RefSeq" id="WP_011947767.1">
    <property type="nucleotide sequence ID" value="NC_009494.2"/>
</dbReference>
<dbReference type="SMR" id="A5II62"/>
<dbReference type="KEGG" id="lpc:LPC_3175"/>
<dbReference type="HOGENOM" id="CLU_007831_2_2_6"/>
<dbReference type="GO" id="GO:0005829">
    <property type="term" value="C:cytosol"/>
    <property type="evidence" value="ECO:0007669"/>
    <property type="project" value="TreeGrafter"/>
</dbReference>
<dbReference type="GO" id="GO:0050660">
    <property type="term" value="F:flavin adenine dinucleotide binding"/>
    <property type="evidence" value="ECO:0007669"/>
    <property type="project" value="UniProtKB-UniRule"/>
</dbReference>
<dbReference type="GO" id="GO:0030488">
    <property type="term" value="P:tRNA methylation"/>
    <property type="evidence" value="ECO:0007669"/>
    <property type="project" value="TreeGrafter"/>
</dbReference>
<dbReference type="GO" id="GO:0002098">
    <property type="term" value="P:tRNA wobble uridine modification"/>
    <property type="evidence" value="ECO:0007669"/>
    <property type="project" value="InterPro"/>
</dbReference>
<dbReference type="FunFam" id="1.10.150.570:FF:000001">
    <property type="entry name" value="tRNA uridine 5-carboxymethylaminomethyl modification enzyme MnmG"/>
    <property type="match status" value="1"/>
</dbReference>
<dbReference type="FunFam" id="3.50.50.60:FF:000002">
    <property type="entry name" value="tRNA uridine 5-carboxymethylaminomethyl modification enzyme MnmG"/>
    <property type="match status" value="1"/>
</dbReference>
<dbReference type="FunFam" id="3.50.50.60:FF:000010">
    <property type="entry name" value="tRNA uridine 5-carboxymethylaminomethyl modification enzyme MnmG"/>
    <property type="match status" value="1"/>
</dbReference>
<dbReference type="Gene3D" id="3.50.50.60">
    <property type="entry name" value="FAD/NAD(P)-binding domain"/>
    <property type="match status" value="2"/>
</dbReference>
<dbReference type="Gene3D" id="1.10.150.570">
    <property type="entry name" value="GidA associated domain, C-terminal subdomain"/>
    <property type="match status" value="1"/>
</dbReference>
<dbReference type="Gene3D" id="1.10.10.1800">
    <property type="entry name" value="tRNA uridine 5-carboxymethylaminomethyl modification enzyme MnmG/GidA"/>
    <property type="match status" value="1"/>
</dbReference>
<dbReference type="HAMAP" id="MF_00129">
    <property type="entry name" value="MnmG_GidA"/>
    <property type="match status" value="1"/>
</dbReference>
<dbReference type="InterPro" id="IPR036188">
    <property type="entry name" value="FAD/NAD-bd_sf"/>
</dbReference>
<dbReference type="InterPro" id="IPR049312">
    <property type="entry name" value="GIDA_C_N"/>
</dbReference>
<dbReference type="InterPro" id="IPR004416">
    <property type="entry name" value="MnmG"/>
</dbReference>
<dbReference type="InterPro" id="IPR002218">
    <property type="entry name" value="MnmG-rel"/>
</dbReference>
<dbReference type="InterPro" id="IPR020595">
    <property type="entry name" value="MnmG-rel_CS"/>
</dbReference>
<dbReference type="InterPro" id="IPR026904">
    <property type="entry name" value="MnmG_C"/>
</dbReference>
<dbReference type="InterPro" id="IPR047001">
    <property type="entry name" value="MnmG_C_subdom"/>
</dbReference>
<dbReference type="InterPro" id="IPR044920">
    <property type="entry name" value="MnmG_C_subdom_sf"/>
</dbReference>
<dbReference type="InterPro" id="IPR040131">
    <property type="entry name" value="MnmG_N"/>
</dbReference>
<dbReference type="NCBIfam" id="TIGR00136">
    <property type="entry name" value="mnmG_gidA"/>
    <property type="match status" value="1"/>
</dbReference>
<dbReference type="PANTHER" id="PTHR11806">
    <property type="entry name" value="GLUCOSE INHIBITED DIVISION PROTEIN A"/>
    <property type="match status" value="1"/>
</dbReference>
<dbReference type="PANTHER" id="PTHR11806:SF0">
    <property type="entry name" value="PROTEIN MTO1 HOMOLOG, MITOCHONDRIAL"/>
    <property type="match status" value="1"/>
</dbReference>
<dbReference type="Pfam" id="PF01134">
    <property type="entry name" value="GIDA"/>
    <property type="match status" value="1"/>
</dbReference>
<dbReference type="Pfam" id="PF21680">
    <property type="entry name" value="GIDA_C_1st"/>
    <property type="match status" value="1"/>
</dbReference>
<dbReference type="Pfam" id="PF13932">
    <property type="entry name" value="SAM_GIDA_C"/>
    <property type="match status" value="1"/>
</dbReference>
<dbReference type="PRINTS" id="PR00411">
    <property type="entry name" value="PNDRDTASEI"/>
</dbReference>
<dbReference type="SMART" id="SM01228">
    <property type="entry name" value="GIDA_assoc_3"/>
    <property type="match status" value="1"/>
</dbReference>
<dbReference type="SUPFAM" id="SSF51905">
    <property type="entry name" value="FAD/NAD(P)-binding domain"/>
    <property type="match status" value="1"/>
</dbReference>
<dbReference type="PROSITE" id="PS01280">
    <property type="entry name" value="GIDA_1"/>
    <property type="match status" value="1"/>
</dbReference>
<dbReference type="PROSITE" id="PS01281">
    <property type="entry name" value="GIDA_2"/>
    <property type="match status" value="1"/>
</dbReference>
<comment type="function">
    <text evidence="1">NAD-binding protein involved in the addition of a carboxymethylaminomethyl (cmnm) group at the wobble position (U34) of certain tRNAs, forming tRNA-cmnm(5)s(2)U34.</text>
</comment>
<comment type="cofactor">
    <cofactor evidence="1">
        <name>FAD</name>
        <dbReference type="ChEBI" id="CHEBI:57692"/>
    </cofactor>
</comment>
<comment type="subunit">
    <text evidence="1">Homodimer. Heterotetramer of two MnmE and two MnmG subunits.</text>
</comment>
<comment type="subcellular location">
    <subcellularLocation>
        <location evidence="1">Cytoplasm</location>
    </subcellularLocation>
</comment>
<comment type="similarity">
    <text evidence="1">Belongs to the MnmG family.</text>
</comment>
<organism>
    <name type="scientific">Legionella pneumophila (strain Corby)</name>
    <dbReference type="NCBI Taxonomy" id="400673"/>
    <lineage>
        <taxon>Bacteria</taxon>
        <taxon>Pseudomonadati</taxon>
        <taxon>Pseudomonadota</taxon>
        <taxon>Gammaproteobacteria</taxon>
        <taxon>Legionellales</taxon>
        <taxon>Legionellaceae</taxon>
        <taxon>Legionella</taxon>
    </lineage>
</organism>
<evidence type="ECO:0000255" key="1">
    <source>
        <dbReference type="HAMAP-Rule" id="MF_00129"/>
    </source>
</evidence>
<name>MNMG_LEGPC</name>
<protein>
    <recommendedName>
        <fullName evidence="1">tRNA uridine 5-carboxymethylaminomethyl modification enzyme MnmG</fullName>
    </recommendedName>
    <alternativeName>
        <fullName evidence="1">Glucose-inhibited division protein A</fullName>
    </alternativeName>
</protein>
<accession>A5II62</accession>